<accession>P98086</accession>
<accession>Q9DCM6</accession>
<evidence type="ECO:0000250" key="1">
    <source>
        <dbReference type="UniProtKB" id="P02745"/>
    </source>
</evidence>
<evidence type="ECO:0000255" key="2">
    <source>
        <dbReference type="PROSITE-ProRule" id="PRU00368"/>
    </source>
</evidence>
<evidence type="ECO:0000256" key="3">
    <source>
        <dbReference type="SAM" id="MobiDB-lite"/>
    </source>
</evidence>
<evidence type="ECO:0000269" key="4">
    <source>
    </source>
</evidence>
<evidence type="ECO:0000303" key="5">
    <source>
    </source>
</evidence>
<evidence type="ECO:0000305" key="6"/>
<evidence type="ECO:0000312" key="7">
    <source>
        <dbReference type="MGI" id="MGI:88223"/>
    </source>
</evidence>
<comment type="function">
    <text evidence="1">Core component of the complement C1 complex, a multiprotein complex that initiates the classical pathway of the complement system, a cascade of proteins that leads to phagocytosis and breakdown of pathogens and signaling that strengthens the adaptive immune system. The classical complement pathway is initiated by the C1Q subcomplex of the C1 complex, which specifically binds IgG or IgM immunoglobulins complexed with antigens, forming antigen-antibody complexes on the surface of pathogens: C1QA, together with C1QB and C1QC, specifically recognizes and binds the Fc regions of IgG or IgM via its C1q domain. Immunoglobulin-binding activates the proenzyme C1R, which cleaves C1S, initiating the proteolytic cascade of the complement system. The C1Q subcomplex is activated by a hexamer of IgG complexed with antigens, while it is activated by a pentameric IgM. The C1Q subcomplex also recognizes and binds phosphatidylserine exposed on the surface of cells undergoing programmed cell death, possibly promoting activation of the complement system.</text>
</comment>
<comment type="activity regulation">
    <text evidence="1">The C1Q subcomplex is inhibited by sulfated molecules, such as triterpenoid sulfates, heparan sulfate, or chondroitin sulfates.</text>
</comment>
<comment type="subunit">
    <text evidence="1">Core component of the complement C1 complex, a calcium-dependent complex composed of 1 molecule of the C1Q subcomplex, 2 molecules of C1R and 2 molecules of C1S. The C1Q subcomplex is composed 18 subunits: 3 chains of C1QA, C1QB, and C1QC trimerize to form 6 collagen-like triple helices connected to six globular ligand-recognition modules (C1q domain). Interacts with CR1 (via Sushi 24 and Sushi 25 domains). Interacts (via C-terminus) with CD33; this interaction activates CD33 inhibitory motifs.</text>
</comment>
<comment type="interaction">
    <interactant intactId="EBI-299840">
        <id>P98086</id>
    </interactant>
    <interactant intactId="EBI-6254212">
        <id>Q9H461</id>
        <label>FZD8</label>
    </interactant>
    <organismsDiffer>true</organismsDiffer>
    <experiments>3</experiments>
</comment>
<comment type="subcellular location">
    <subcellularLocation>
        <location evidence="1">Secreted</location>
    </subcellularLocation>
    <subcellularLocation>
        <location evidence="1">Cell surface</location>
    </subcellularLocation>
    <text evidence="1">Specifically binds IgG or IgM immunoglobulins complexed with antigens, forming antigen-antibody complexes on the surface of pathogens.</text>
</comment>
<comment type="domain">
    <text evidence="1">The C1q domain is the ligand-recognition domain, which specifically recognizes and binds the Fc regions of IgG or IgM immunoglobulins.</text>
</comment>
<comment type="domain">
    <text evidence="1">The collagen-like domain interacts with C1R and C1S proenzymes.</text>
</comment>
<comment type="PTM">
    <text evidence="1">O-linked glycans are assumed to be the Glc-Gal disaccharides typically found as secondary modifications of hydroxylated lysines in collagen-like domains.</text>
</comment>
<protein>
    <recommendedName>
        <fullName>Complement C1q subcomponent subunit A</fullName>
    </recommendedName>
</protein>
<dbReference type="EMBL" id="X58861">
    <property type="protein sequence ID" value="CAA41664.1"/>
    <property type="molecule type" value="mRNA"/>
</dbReference>
<dbReference type="EMBL" id="AK002655">
    <property type="protein sequence ID" value="BAB22262.1"/>
    <property type="molecule type" value="mRNA"/>
</dbReference>
<dbReference type="EMBL" id="AK136737">
    <property type="protein sequence ID" value="BAE23115.1"/>
    <property type="molecule type" value="mRNA"/>
</dbReference>
<dbReference type="EMBL" id="AK159210">
    <property type="protein sequence ID" value="BAE34901.1"/>
    <property type="molecule type" value="mRNA"/>
</dbReference>
<dbReference type="EMBL" id="AL627214">
    <property type="status" value="NOT_ANNOTATED_CDS"/>
    <property type="molecule type" value="Genomic_DNA"/>
</dbReference>
<dbReference type="EMBL" id="CH466552">
    <property type="protein sequence ID" value="EDL29926.1"/>
    <property type="molecule type" value="Genomic_DNA"/>
</dbReference>
<dbReference type="EMBL" id="BC002086">
    <property type="protein sequence ID" value="AAH02086.1"/>
    <property type="molecule type" value="mRNA"/>
</dbReference>
<dbReference type="CCDS" id="CCDS18812.1"/>
<dbReference type="PIR" id="S19018">
    <property type="entry name" value="S19018"/>
</dbReference>
<dbReference type="RefSeq" id="NP_031598.2">
    <property type="nucleotide sequence ID" value="NM_007572.2"/>
</dbReference>
<dbReference type="SMR" id="P98086"/>
<dbReference type="BioGRID" id="198412">
    <property type="interactions" value="7"/>
</dbReference>
<dbReference type="ComplexPortal" id="CPX-4981">
    <property type="entry name" value="Complement component C1q complex"/>
</dbReference>
<dbReference type="FunCoup" id="P98086">
    <property type="interactions" value="65"/>
</dbReference>
<dbReference type="IntAct" id="P98086">
    <property type="interactions" value="7"/>
</dbReference>
<dbReference type="MINT" id="P98086"/>
<dbReference type="STRING" id="10090.ENSMUSP00000048836"/>
<dbReference type="GlyConnect" id="2223">
    <property type="glycosylation" value="7 N-Linked glycans (1 site)"/>
</dbReference>
<dbReference type="GlyCosmos" id="P98086">
    <property type="glycosylation" value="4 sites, 7 glycans"/>
</dbReference>
<dbReference type="GlyGen" id="P98086">
    <property type="glycosylation" value="5 sites, 8 N-linked glycans (1 site), 1 O-linked glycan (1 site)"/>
</dbReference>
<dbReference type="iPTMnet" id="P98086"/>
<dbReference type="PhosphoSitePlus" id="P98086"/>
<dbReference type="SwissPalm" id="P98086"/>
<dbReference type="CPTAC" id="non-CPTAC-3638"/>
<dbReference type="CPTAC" id="non-CPTAC-5581"/>
<dbReference type="jPOST" id="P98086"/>
<dbReference type="PaxDb" id="10090-ENSMUSP00000048836"/>
<dbReference type="PeptideAtlas" id="P98086"/>
<dbReference type="ProteomicsDB" id="265397"/>
<dbReference type="Antibodypedia" id="707">
    <property type="antibodies" value="470 antibodies from 37 providers"/>
</dbReference>
<dbReference type="DNASU" id="12259"/>
<dbReference type="Ensembl" id="ENSMUST00000046285.6">
    <property type="protein sequence ID" value="ENSMUSP00000048836.6"/>
    <property type="gene ID" value="ENSMUSG00000036887.6"/>
</dbReference>
<dbReference type="GeneID" id="12259"/>
<dbReference type="KEGG" id="mmu:12259"/>
<dbReference type="UCSC" id="uc008vir.1">
    <property type="organism name" value="mouse"/>
</dbReference>
<dbReference type="AGR" id="MGI:88223"/>
<dbReference type="CTD" id="712"/>
<dbReference type="MGI" id="MGI:88223">
    <property type="gene designation" value="C1qa"/>
</dbReference>
<dbReference type="VEuPathDB" id="HostDB:ENSMUSG00000036887"/>
<dbReference type="eggNOG" id="ENOG502RZM2">
    <property type="taxonomic scope" value="Eukaryota"/>
</dbReference>
<dbReference type="GeneTree" id="ENSGT00940000162143"/>
<dbReference type="HOGENOM" id="CLU_001074_0_2_1"/>
<dbReference type="InParanoid" id="P98086"/>
<dbReference type="OMA" id="MEGPQGW"/>
<dbReference type="OrthoDB" id="6343173at2759"/>
<dbReference type="PhylomeDB" id="P98086"/>
<dbReference type="TreeFam" id="TF329591"/>
<dbReference type="Reactome" id="R-MMU-166663">
    <property type="pathway name" value="Initial triggering of complement"/>
</dbReference>
<dbReference type="Reactome" id="R-MMU-173623">
    <property type="pathway name" value="Classical antibody-mediated complement activation"/>
</dbReference>
<dbReference type="Reactome" id="R-MMU-977606">
    <property type="pathway name" value="Regulation of Complement cascade"/>
</dbReference>
<dbReference type="BioGRID-ORCS" id="12259">
    <property type="hits" value="0 hits in 77 CRISPR screens"/>
</dbReference>
<dbReference type="ChiTaRS" id="C1qa">
    <property type="organism name" value="mouse"/>
</dbReference>
<dbReference type="PRO" id="PR:P98086"/>
<dbReference type="Proteomes" id="UP000000589">
    <property type="component" value="Chromosome 4"/>
</dbReference>
<dbReference type="RNAct" id="P98086">
    <property type="molecule type" value="protein"/>
</dbReference>
<dbReference type="Bgee" id="ENSMUSG00000036887">
    <property type="expression patterns" value="Expressed in stroma of bone marrow and 215 other cell types or tissues"/>
</dbReference>
<dbReference type="ExpressionAtlas" id="P98086">
    <property type="expression patterns" value="baseline and differential"/>
</dbReference>
<dbReference type="GO" id="GO:0005581">
    <property type="term" value="C:collagen trimer"/>
    <property type="evidence" value="ECO:0007669"/>
    <property type="project" value="UniProtKB-KW"/>
</dbReference>
<dbReference type="GO" id="GO:0005602">
    <property type="term" value="C:complement component C1 complex"/>
    <property type="evidence" value="ECO:0000303"/>
    <property type="project" value="ComplexPortal"/>
</dbReference>
<dbReference type="GO" id="GO:0062167">
    <property type="term" value="C:complement component C1q complex"/>
    <property type="evidence" value="ECO:0000266"/>
    <property type="project" value="ComplexPortal"/>
</dbReference>
<dbReference type="GO" id="GO:0005576">
    <property type="term" value="C:extracellular region"/>
    <property type="evidence" value="ECO:0000266"/>
    <property type="project" value="ComplexPortal"/>
</dbReference>
<dbReference type="GO" id="GO:0005615">
    <property type="term" value="C:extracellular space"/>
    <property type="evidence" value="ECO:0007005"/>
    <property type="project" value="BHF-UCL"/>
</dbReference>
<dbReference type="GO" id="GO:0098890">
    <property type="term" value="C:extrinsic component of postsynaptic membrane"/>
    <property type="evidence" value="ECO:0000314"/>
    <property type="project" value="SynGO"/>
</dbReference>
<dbReference type="GO" id="GO:0098888">
    <property type="term" value="C:extrinsic component of presynaptic membrane"/>
    <property type="evidence" value="ECO:0000314"/>
    <property type="project" value="SynGO"/>
</dbReference>
<dbReference type="GO" id="GO:0098978">
    <property type="term" value="C:glutamatergic synapse"/>
    <property type="evidence" value="ECO:0000314"/>
    <property type="project" value="SynGO"/>
</dbReference>
<dbReference type="GO" id="GO:0098794">
    <property type="term" value="C:postsynapse"/>
    <property type="evidence" value="ECO:0000316"/>
    <property type="project" value="ARUK-UCL"/>
</dbReference>
<dbReference type="GO" id="GO:0045202">
    <property type="term" value="C:synapse"/>
    <property type="evidence" value="ECO:0000314"/>
    <property type="project" value="ARUK-UCL"/>
</dbReference>
<dbReference type="GO" id="GO:0048143">
    <property type="term" value="P:astrocyte activation"/>
    <property type="evidence" value="ECO:0000316"/>
    <property type="project" value="ARUK-UCL"/>
</dbReference>
<dbReference type="GO" id="GO:0006958">
    <property type="term" value="P:complement activation, classical pathway"/>
    <property type="evidence" value="ECO:0000315"/>
    <property type="project" value="MGI"/>
</dbReference>
<dbReference type="GO" id="GO:0150062">
    <property type="term" value="P:complement-mediated synapse pruning"/>
    <property type="evidence" value="ECO:0000315"/>
    <property type="project" value="ARUK-UCL"/>
</dbReference>
<dbReference type="GO" id="GO:0045087">
    <property type="term" value="P:innate immune response"/>
    <property type="evidence" value="ECO:0007669"/>
    <property type="project" value="UniProtKB-KW"/>
</dbReference>
<dbReference type="GO" id="GO:0001774">
    <property type="term" value="P:microglial cell activation"/>
    <property type="evidence" value="ECO:0000316"/>
    <property type="project" value="ARUK-UCL"/>
</dbReference>
<dbReference type="GO" id="GO:0016322">
    <property type="term" value="P:neuron remodeling"/>
    <property type="evidence" value="ECO:0000315"/>
    <property type="project" value="ARUK-UCL"/>
</dbReference>
<dbReference type="GO" id="GO:0050808">
    <property type="term" value="P:synapse organization"/>
    <property type="evidence" value="ECO:0000316"/>
    <property type="project" value="ARUK-UCL"/>
</dbReference>
<dbReference type="GO" id="GO:0098883">
    <property type="term" value="P:synapse pruning"/>
    <property type="evidence" value="ECO:0000316"/>
    <property type="project" value="ARUK-UCL"/>
</dbReference>
<dbReference type="GO" id="GO:0150064">
    <property type="term" value="P:vertebrate eye-specific patterning"/>
    <property type="evidence" value="ECO:0000315"/>
    <property type="project" value="ARUK-UCL"/>
</dbReference>
<dbReference type="FunFam" id="2.60.120.40:FF:000001">
    <property type="entry name" value="Complement C1q B chain"/>
    <property type="match status" value="1"/>
</dbReference>
<dbReference type="Gene3D" id="2.60.120.40">
    <property type="match status" value="1"/>
</dbReference>
<dbReference type="InterPro" id="IPR001073">
    <property type="entry name" value="C1q_dom"/>
</dbReference>
<dbReference type="InterPro" id="IPR008160">
    <property type="entry name" value="Collagen"/>
</dbReference>
<dbReference type="InterPro" id="IPR050392">
    <property type="entry name" value="Collagen/C1q_domain"/>
</dbReference>
<dbReference type="InterPro" id="IPR008983">
    <property type="entry name" value="Tumour_necrosis_fac-like_dom"/>
</dbReference>
<dbReference type="PANTHER" id="PTHR15427:SF26">
    <property type="entry name" value="COMPLEMENT C1Q SUBCOMPONENT SUBUNIT A"/>
    <property type="match status" value="1"/>
</dbReference>
<dbReference type="PANTHER" id="PTHR15427">
    <property type="entry name" value="EMILIN ELASTIN MICROFIBRIL INTERFACE-LOCATED PROTEIN ELASTIN MICROFIBRIL INTERFACER"/>
    <property type="match status" value="1"/>
</dbReference>
<dbReference type="Pfam" id="PF00386">
    <property type="entry name" value="C1q"/>
    <property type="match status" value="1"/>
</dbReference>
<dbReference type="Pfam" id="PF01391">
    <property type="entry name" value="Collagen"/>
    <property type="match status" value="1"/>
</dbReference>
<dbReference type="PRINTS" id="PR00007">
    <property type="entry name" value="COMPLEMNTC1Q"/>
</dbReference>
<dbReference type="SMART" id="SM00110">
    <property type="entry name" value="C1Q"/>
    <property type="match status" value="1"/>
</dbReference>
<dbReference type="SUPFAM" id="SSF49842">
    <property type="entry name" value="TNF-like"/>
    <property type="match status" value="1"/>
</dbReference>
<dbReference type="PROSITE" id="PS50871">
    <property type="entry name" value="C1Q"/>
    <property type="match status" value="1"/>
</dbReference>
<keyword id="KW-0106">Calcium</keyword>
<keyword id="KW-0176">Collagen</keyword>
<keyword id="KW-0180">Complement pathway</keyword>
<keyword id="KW-1015">Disulfide bond</keyword>
<keyword id="KW-0325">Glycoprotein</keyword>
<keyword id="KW-0379">Hydroxylation</keyword>
<keyword id="KW-0391">Immunity</keyword>
<keyword id="KW-0399">Innate immunity</keyword>
<keyword id="KW-0479">Metal-binding</keyword>
<keyword id="KW-1185">Reference proteome</keyword>
<keyword id="KW-0677">Repeat</keyword>
<keyword id="KW-0964">Secreted</keyword>
<keyword id="KW-0732">Signal</keyword>
<name>C1QA_MOUSE</name>
<proteinExistence type="evidence at protein level"/>
<reference key="1">
    <citation type="journal article" date="1991" name="J. Immunol.">
        <title>Gene expression of the A- and B-chain of mouse C1q in different tissues and the characterization of the recombinant A-chain.</title>
        <authorList>
            <person name="Petry F."/>
            <person name="Reid K.B.M."/>
            <person name="Loos M."/>
        </authorList>
    </citation>
    <scope>NUCLEOTIDE SEQUENCE [MRNA]</scope>
    <source>
        <strain>ICR</strain>
        <tissue>Macrophage</tissue>
    </source>
</reference>
<reference key="2">
    <citation type="journal article" date="1996" name="Immunogenetics">
        <title>The mouse C1q genes are clustered on chromosome 4 and show conservation of gene organization.</title>
        <authorList>
            <person name="Petry F."/>
            <person name="McClive P.J."/>
            <person name="Botto M."/>
            <person name="Morley B.J."/>
            <person name="Morahan G."/>
            <person name="Loos M."/>
        </authorList>
    </citation>
    <scope>NUCLEOTIDE SEQUENCE [MRNA]</scope>
    <source>
        <strain>129</strain>
        <tissue>Liver</tissue>
    </source>
</reference>
<reference key="3">
    <citation type="journal article" date="2005" name="Science">
        <title>The transcriptional landscape of the mammalian genome.</title>
        <authorList>
            <person name="Carninci P."/>
            <person name="Kasukawa T."/>
            <person name="Katayama S."/>
            <person name="Gough J."/>
            <person name="Frith M.C."/>
            <person name="Maeda N."/>
            <person name="Oyama R."/>
            <person name="Ravasi T."/>
            <person name="Lenhard B."/>
            <person name="Wells C."/>
            <person name="Kodzius R."/>
            <person name="Shimokawa K."/>
            <person name="Bajic V.B."/>
            <person name="Brenner S.E."/>
            <person name="Batalov S."/>
            <person name="Forrest A.R."/>
            <person name="Zavolan M."/>
            <person name="Davis M.J."/>
            <person name="Wilming L.G."/>
            <person name="Aidinis V."/>
            <person name="Allen J.E."/>
            <person name="Ambesi-Impiombato A."/>
            <person name="Apweiler R."/>
            <person name="Aturaliya R.N."/>
            <person name="Bailey T.L."/>
            <person name="Bansal M."/>
            <person name="Baxter L."/>
            <person name="Beisel K.W."/>
            <person name="Bersano T."/>
            <person name="Bono H."/>
            <person name="Chalk A.M."/>
            <person name="Chiu K.P."/>
            <person name="Choudhary V."/>
            <person name="Christoffels A."/>
            <person name="Clutterbuck D.R."/>
            <person name="Crowe M.L."/>
            <person name="Dalla E."/>
            <person name="Dalrymple B.P."/>
            <person name="de Bono B."/>
            <person name="Della Gatta G."/>
            <person name="di Bernardo D."/>
            <person name="Down T."/>
            <person name="Engstrom P."/>
            <person name="Fagiolini M."/>
            <person name="Faulkner G."/>
            <person name="Fletcher C.F."/>
            <person name="Fukushima T."/>
            <person name="Furuno M."/>
            <person name="Futaki S."/>
            <person name="Gariboldi M."/>
            <person name="Georgii-Hemming P."/>
            <person name="Gingeras T.R."/>
            <person name="Gojobori T."/>
            <person name="Green R.E."/>
            <person name="Gustincich S."/>
            <person name="Harbers M."/>
            <person name="Hayashi Y."/>
            <person name="Hensch T.K."/>
            <person name="Hirokawa N."/>
            <person name="Hill D."/>
            <person name="Huminiecki L."/>
            <person name="Iacono M."/>
            <person name="Ikeo K."/>
            <person name="Iwama A."/>
            <person name="Ishikawa T."/>
            <person name="Jakt M."/>
            <person name="Kanapin A."/>
            <person name="Katoh M."/>
            <person name="Kawasawa Y."/>
            <person name="Kelso J."/>
            <person name="Kitamura H."/>
            <person name="Kitano H."/>
            <person name="Kollias G."/>
            <person name="Krishnan S.P."/>
            <person name="Kruger A."/>
            <person name="Kummerfeld S.K."/>
            <person name="Kurochkin I.V."/>
            <person name="Lareau L.F."/>
            <person name="Lazarevic D."/>
            <person name="Lipovich L."/>
            <person name="Liu J."/>
            <person name="Liuni S."/>
            <person name="McWilliam S."/>
            <person name="Madan Babu M."/>
            <person name="Madera M."/>
            <person name="Marchionni L."/>
            <person name="Matsuda H."/>
            <person name="Matsuzawa S."/>
            <person name="Miki H."/>
            <person name="Mignone F."/>
            <person name="Miyake S."/>
            <person name="Morris K."/>
            <person name="Mottagui-Tabar S."/>
            <person name="Mulder N."/>
            <person name="Nakano N."/>
            <person name="Nakauchi H."/>
            <person name="Ng P."/>
            <person name="Nilsson R."/>
            <person name="Nishiguchi S."/>
            <person name="Nishikawa S."/>
            <person name="Nori F."/>
            <person name="Ohara O."/>
            <person name="Okazaki Y."/>
            <person name="Orlando V."/>
            <person name="Pang K.C."/>
            <person name="Pavan W.J."/>
            <person name="Pavesi G."/>
            <person name="Pesole G."/>
            <person name="Petrovsky N."/>
            <person name="Piazza S."/>
            <person name="Reed J."/>
            <person name="Reid J.F."/>
            <person name="Ring B.Z."/>
            <person name="Ringwald M."/>
            <person name="Rost B."/>
            <person name="Ruan Y."/>
            <person name="Salzberg S.L."/>
            <person name="Sandelin A."/>
            <person name="Schneider C."/>
            <person name="Schoenbach C."/>
            <person name="Sekiguchi K."/>
            <person name="Semple C.A."/>
            <person name="Seno S."/>
            <person name="Sessa L."/>
            <person name="Sheng Y."/>
            <person name="Shibata Y."/>
            <person name="Shimada H."/>
            <person name="Shimada K."/>
            <person name="Silva D."/>
            <person name="Sinclair B."/>
            <person name="Sperling S."/>
            <person name="Stupka E."/>
            <person name="Sugiura K."/>
            <person name="Sultana R."/>
            <person name="Takenaka Y."/>
            <person name="Taki K."/>
            <person name="Tammoja K."/>
            <person name="Tan S.L."/>
            <person name="Tang S."/>
            <person name="Taylor M.S."/>
            <person name="Tegner J."/>
            <person name="Teichmann S.A."/>
            <person name="Ueda H.R."/>
            <person name="van Nimwegen E."/>
            <person name="Verardo R."/>
            <person name="Wei C.L."/>
            <person name="Yagi K."/>
            <person name="Yamanishi H."/>
            <person name="Zabarovsky E."/>
            <person name="Zhu S."/>
            <person name="Zimmer A."/>
            <person name="Hide W."/>
            <person name="Bult C."/>
            <person name="Grimmond S.M."/>
            <person name="Teasdale R.D."/>
            <person name="Liu E.T."/>
            <person name="Brusic V."/>
            <person name="Quackenbush J."/>
            <person name="Wahlestedt C."/>
            <person name="Mattick J.S."/>
            <person name="Hume D.A."/>
            <person name="Kai C."/>
            <person name="Sasaki D."/>
            <person name="Tomaru Y."/>
            <person name="Fukuda S."/>
            <person name="Kanamori-Katayama M."/>
            <person name="Suzuki M."/>
            <person name="Aoki J."/>
            <person name="Arakawa T."/>
            <person name="Iida J."/>
            <person name="Imamura K."/>
            <person name="Itoh M."/>
            <person name="Kato T."/>
            <person name="Kawaji H."/>
            <person name="Kawagashira N."/>
            <person name="Kawashima T."/>
            <person name="Kojima M."/>
            <person name="Kondo S."/>
            <person name="Konno H."/>
            <person name="Nakano K."/>
            <person name="Ninomiya N."/>
            <person name="Nishio T."/>
            <person name="Okada M."/>
            <person name="Plessy C."/>
            <person name="Shibata K."/>
            <person name="Shiraki T."/>
            <person name="Suzuki S."/>
            <person name="Tagami M."/>
            <person name="Waki K."/>
            <person name="Watahiki A."/>
            <person name="Okamura-Oho Y."/>
            <person name="Suzuki H."/>
            <person name="Kawai J."/>
            <person name="Hayashizaki Y."/>
        </authorList>
    </citation>
    <scope>NUCLEOTIDE SEQUENCE [LARGE SCALE MRNA]</scope>
    <source>
        <strain>C57BL/6J</strain>
        <tissue>Epididymis</tissue>
        <tissue>Kidney</tissue>
    </source>
</reference>
<reference key="4">
    <citation type="journal article" date="2009" name="PLoS Biol.">
        <title>Lineage-specific biology revealed by a finished genome assembly of the mouse.</title>
        <authorList>
            <person name="Church D.M."/>
            <person name="Goodstadt L."/>
            <person name="Hillier L.W."/>
            <person name="Zody M.C."/>
            <person name="Goldstein S."/>
            <person name="She X."/>
            <person name="Bult C.J."/>
            <person name="Agarwala R."/>
            <person name="Cherry J.L."/>
            <person name="DiCuccio M."/>
            <person name="Hlavina W."/>
            <person name="Kapustin Y."/>
            <person name="Meric P."/>
            <person name="Maglott D."/>
            <person name="Birtle Z."/>
            <person name="Marques A.C."/>
            <person name="Graves T."/>
            <person name="Zhou S."/>
            <person name="Teague B."/>
            <person name="Potamousis K."/>
            <person name="Churas C."/>
            <person name="Place M."/>
            <person name="Herschleb J."/>
            <person name="Runnheim R."/>
            <person name="Forrest D."/>
            <person name="Amos-Landgraf J."/>
            <person name="Schwartz D.C."/>
            <person name="Cheng Z."/>
            <person name="Lindblad-Toh K."/>
            <person name="Eichler E.E."/>
            <person name="Ponting C.P."/>
        </authorList>
    </citation>
    <scope>NUCLEOTIDE SEQUENCE [LARGE SCALE GENOMIC DNA]</scope>
    <source>
        <strain>C57BL/6J</strain>
    </source>
</reference>
<reference key="5">
    <citation type="submission" date="2005-07" db="EMBL/GenBank/DDBJ databases">
        <authorList>
            <person name="Mural R.J."/>
            <person name="Adams M.D."/>
            <person name="Myers E.W."/>
            <person name="Smith H.O."/>
            <person name="Venter J.C."/>
        </authorList>
    </citation>
    <scope>NUCLEOTIDE SEQUENCE [LARGE SCALE GENOMIC DNA]</scope>
</reference>
<reference key="6">
    <citation type="journal article" date="2004" name="Genome Res.">
        <title>The status, quality, and expansion of the NIH full-length cDNA project: the Mammalian Gene Collection (MGC).</title>
        <authorList>
            <consortium name="The MGC Project Team"/>
        </authorList>
    </citation>
    <scope>NUCLEOTIDE SEQUENCE [LARGE SCALE MRNA]</scope>
    <source>
        <strain>Czech II</strain>
        <tissue>Mammary tumor</tissue>
    </source>
</reference>
<reference key="7">
    <citation type="journal article" date="2006" name="J. Proteome Res.">
        <title>Proteome-wide characterization of N-glycosylation events by diagonal chromatography.</title>
        <authorList>
            <person name="Ghesquiere B."/>
            <person name="Van Damme J."/>
            <person name="Martens L."/>
            <person name="Vandekerckhove J."/>
            <person name="Gevaert K."/>
        </authorList>
    </citation>
    <scope>GLYCOSYLATION [LARGE SCALE ANALYSIS] AT ASN-146</scope>
    <source>
        <strain>C57BL/6J</strain>
        <tissue>Plasma</tissue>
    </source>
</reference>
<reference key="8">
    <citation type="journal article" date="2010" name="Cell">
        <title>A tissue-specific atlas of mouse protein phosphorylation and expression.</title>
        <authorList>
            <person name="Huttlin E.L."/>
            <person name="Jedrychowski M.P."/>
            <person name="Elias J.E."/>
            <person name="Goswami T."/>
            <person name="Rad R."/>
            <person name="Beausoleil S.A."/>
            <person name="Villen J."/>
            <person name="Haas W."/>
            <person name="Sowa M.E."/>
            <person name="Gygi S.P."/>
        </authorList>
    </citation>
    <scope>IDENTIFICATION BY MASS SPECTROMETRY [LARGE SCALE ANALYSIS]</scope>
    <source>
        <tissue>Brown adipose tissue</tissue>
        <tissue>Spleen</tissue>
    </source>
</reference>
<feature type="signal peptide" evidence="1">
    <location>
        <begin position="1"/>
        <end position="22"/>
    </location>
</feature>
<feature type="chain" id="PRO_0000003518" description="Complement C1q subcomponent subunit A">
    <location>
        <begin position="23"/>
        <end position="245"/>
    </location>
</feature>
<feature type="domain" description="Collagen-like">
    <location>
        <begin position="31"/>
        <end position="109"/>
    </location>
</feature>
<feature type="domain" description="C1q" evidence="2">
    <location>
        <begin position="110"/>
        <end position="245"/>
    </location>
</feature>
<feature type="region of interest" description="Disordered" evidence="3">
    <location>
        <begin position="28"/>
        <end position="114"/>
    </location>
</feature>
<feature type="compositionally biased region" description="Low complexity" evidence="3">
    <location>
        <begin position="79"/>
        <end position="99"/>
    </location>
</feature>
<feature type="binding site" evidence="1">
    <location>
        <position position="199"/>
    </location>
    <ligand>
        <name>Ca(2+)</name>
        <dbReference type="ChEBI" id="CHEBI:29108"/>
    </ligand>
</feature>
<feature type="modified residue" description="4-hydroxyproline" evidence="1">
    <location>
        <position position="39"/>
    </location>
</feature>
<feature type="modified residue" description="4-hydroxyproline" evidence="1">
    <location>
        <position position="45"/>
    </location>
</feature>
<feature type="modified residue" description="5-hydroxylysine" evidence="1">
    <location>
        <position position="48"/>
    </location>
</feature>
<feature type="modified residue" description="4-hydroxyproline" evidence="1">
    <location>
        <position position="54"/>
    </location>
</feature>
<feature type="modified residue" description="5-hydroxylysine" evidence="1">
    <location>
        <position position="67"/>
    </location>
</feature>
<feature type="modified residue" description="4-hydroxyproline" evidence="1">
    <location>
        <position position="79"/>
    </location>
</feature>
<feature type="modified residue" description="4-hydroxyproline" evidence="1">
    <location>
        <position position="85"/>
    </location>
</feature>
<feature type="modified residue" description="5-hydroxylysine" evidence="1">
    <location>
        <position position="100"/>
    </location>
</feature>
<feature type="glycosylation site" description="O-linked (Gal...) hydroxylysine; alternate" evidence="1">
    <location>
        <position position="48"/>
    </location>
</feature>
<feature type="glycosylation site" description="O-linked (Gal...) hydroxylysine; alternate" evidence="1">
    <location>
        <position position="67"/>
    </location>
</feature>
<feature type="glycosylation site" description="O-linked (Gal...) hydroxylysine; alternate" evidence="1">
    <location>
        <position position="100"/>
    </location>
</feature>
<feature type="glycosylation site" description="N-linked (GlcNAc...) asparagine" evidence="4">
    <location>
        <position position="146"/>
    </location>
</feature>
<feature type="disulfide bond" description="Interchain (with C-29 in B chain)" evidence="1">
    <location>
        <position position="26"/>
    </location>
</feature>
<feature type="sequence conflict" description="In Ref. 1; CAA41664." evidence="6" ref="1">
    <original>T</original>
    <variation>I</variation>
    <location>
        <position position="16"/>
    </location>
</feature>
<organism>
    <name type="scientific">Mus musculus</name>
    <name type="common">Mouse</name>
    <dbReference type="NCBI Taxonomy" id="10090"/>
    <lineage>
        <taxon>Eukaryota</taxon>
        <taxon>Metazoa</taxon>
        <taxon>Chordata</taxon>
        <taxon>Craniata</taxon>
        <taxon>Vertebrata</taxon>
        <taxon>Euteleostomi</taxon>
        <taxon>Mammalia</taxon>
        <taxon>Eutheria</taxon>
        <taxon>Euarchontoglires</taxon>
        <taxon>Glires</taxon>
        <taxon>Rodentia</taxon>
        <taxon>Myomorpha</taxon>
        <taxon>Muroidea</taxon>
        <taxon>Muridae</taxon>
        <taxon>Murinae</taxon>
        <taxon>Mus</taxon>
        <taxon>Mus</taxon>
    </lineage>
</organism>
<gene>
    <name evidence="5 7" type="primary">C1qa</name>
</gene>
<sequence>METSQGWLVACVLTMTLVWTVAEDVCRAPNGKDGAPGNPGRPGRPGLKGERGEPGAAGIRTGIRGFKGDPGESGPPGKPGNVGLPGPSGPLGDSGPQGLKGVKGNPGNIRDQPRPAFSAIRQNPMTLGNVVIFDKVLTNQESPYQNHTGRFICAVPGFYYFNFQVISKWDLCLFIKSSSGGQPRDSLSFSNTNNKGLFQVLAGGTVLQLRRGDEVWIEKDPAKGRIYQGTEADSIFSGFLIFPSA</sequence>